<keyword id="KW-1003">Cell membrane</keyword>
<keyword id="KW-0472">Membrane</keyword>
<keyword id="KW-1185">Reference proteome</keyword>
<keyword id="KW-0812">Transmembrane</keyword>
<keyword id="KW-1133">Transmembrane helix</keyword>
<keyword id="KW-0813">Transport</keyword>
<comment type="subcellular location">
    <subcellularLocation>
        <location evidence="2">Cell membrane</location>
        <topology evidence="2">Multi-pass membrane protein</topology>
    </subcellularLocation>
</comment>
<comment type="similarity">
    <text evidence="2">Belongs to the major facilitator superfamily. Phthalate permease family.</text>
</comment>
<proteinExistence type="inferred from homology"/>
<protein>
    <recommendedName>
        <fullName>Uncharacterized transporter YybO</fullName>
    </recommendedName>
</protein>
<evidence type="ECO:0000255" key="1"/>
<evidence type="ECO:0000305" key="2"/>
<dbReference type="EMBL" id="D26185">
    <property type="protein sequence ID" value="BAA05188.1"/>
    <property type="molecule type" value="Genomic_DNA"/>
</dbReference>
<dbReference type="EMBL" id="AL009126">
    <property type="protein sequence ID" value="CAB16094.1"/>
    <property type="molecule type" value="Genomic_DNA"/>
</dbReference>
<dbReference type="PIR" id="S65982">
    <property type="entry name" value="S65982"/>
</dbReference>
<dbReference type="RefSeq" id="NP_391937.1">
    <property type="nucleotide sequence ID" value="NC_000964.3"/>
</dbReference>
<dbReference type="RefSeq" id="WP_009968439.1">
    <property type="nucleotide sequence ID" value="NZ_OZ025638.1"/>
</dbReference>
<dbReference type="SMR" id="P37489"/>
<dbReference type="FunCoup" id="P37489">
    <property type="interactions" value="399"/>
</dbReference>
<dbReference type="STRING" id="224308.BSU40570"/>
<dbReference type="TCDB" id="2.A.1.14.39">
    <property type="family name" value="the major facilitator superfamily (mfs)"/>
</dbReference>
<dbReference type="PaxDb" id="224308-BSU40570"/>
<dbReference type="EnsemblBacteria" id="CAB16094">
    <property type="protein sequence ID" value="CAB16094"/>
    <property type="gene ID" value="BSU_40570"/>
</dbReference>
<dbReference type="GeneID" id="937836"/>
<dbReference type="KEGG" id="bsu:BSU40570"/>
<dbReference type="PATRIC" id="fig|224308.179.peg.4394"/>
<dbReference type="eggNOG" id="COG2271">
    <property type="taxonomic scope" value="Bacteria"/>
</dbReference>
<dbReference type="InParanoid" id="P37489"/>
<dbReference type="OrthoDB" id="6360at2"/>
<dbReference type="PhylomeDB" id="P37489"/>
<dbReference type="BioCyc" id="BSUB:BSU40570-MONOMER"/>
<dbReference type="Proteomes" id="UP000001570">
    <property type="component" value="Chromosome"/>
</dbReference>
<dbReference type="GO" id="GO:0005886">
    <property type="term" value="C:plasma membrane"/>
    <property type="evidence" value="ECO:0007669"/>
    <property type="project" value="UniProtKB-SubCell"/>
</dbReference>
<dbReference type="GO" id="GO:0022857">
    <property type="term" value="F:transmembrane transporter activity"/>
    <property type="evidence" value="ECO:0007669"/>
    <property type="project" value="InterPro"/>
</dbReference>
<dbReference type="CDD" id="cd17319">
    <property type="entry name" value="MFS_ExuT_GudP_like"/>
    <property type="match status" value="1"/>
</dbReference>
<dbReference type="Gene3D" id="1.20.1250.20">
    <property type="entry name" value="MFS general substrate transporter like domains"/>
    <property type="match status" value="2"/>
</dbReference>
<dbReference type="InterPro" id="IPR011701">
    <property type="entry name" value="MFS"/>
</dbReference>
<dbReference type="InterPro" id="IPR020846">
    <property type="entry name" value="MFS_dom"/>
</dbReference>
<dbReference type="InterPro" id="IPR050382">
    <property type="entry name" value="MFS_Na/Anion_cotransporter"/>
</dbReference>
<dbReference type="InterPro" id="IPR036259">
    <property type="entry name" value="MFS_trans_sf"/>
</dbReference>
<dbReference type="PANTHER" id="PTHR11662:SF399">
    <property type="entry name" value="FI19708P1-RELATED"/>
    <property type="match status" value="1"/>
</dbReference>
<dbReference type="PANTHER" id="PTHR11662">
    <property type="entry name" value="SOLUTE CARRIER FAMILY 17"/>
    <property type="match status" value="1"/>
</dbReference>
<dbReference type="Pfam" id="PF07690">
    <property type="entry name" value="MFS_1"/>
    <property type="match status" value="1"/>
</dbReference>
<dbReference type="SUPFAM" id="SSF103473">
    <property type="entry name" value="MFS general substrate transporter"/>
    <property type="match status" value="1"/>
</dbReference>
<dbReference type="PROSITE" id="PS50850">
    <property type="entry name" value="MFS"/>
    <property type="match status" value="1"/>
</dbReference>
<gene>
    <name type="primary">yybO</name>
    <name type="ordered locus">BSU40570</name>
</gene>
<organism>
    <name type="scientific">Bacillus subtilis (strain 168)</name>
    <dbReference type="NCBI Taxonomy" id="224308"/>
    <lineage>
        <taxon>Bacteria</taxon>
        <taxon>Bacillati</taxon>
        <taxon>Bacillota</taxon>
        <taxon>Bacilli</taxon>
        <taxon>Bacillales</taxon>
        <taxon>Bacillaceae</taxon>
        <taxon>Bacillus</taxon>
    </lineage>
</organism>
<sequence>MTEEVFIMSQERVKRPGHTRWYISSLLSGIIILNYFDRVAISVAAPAIQDSFHLTATELGIVFSIYTYSYTLMQLPVGSLLDRFGVAWVTRVGMTIWSFLTILLAFLQGKLLLYLFRFLIGLTSASAFPAASKATALWFPPSERGLANSLFDSAAKFSNVIGAPLVAFLVTTFDWRVAFLTIGCINVLFTIFFWQYYEQPERHKRISKSELNYIQKHNAITTEQIPYKTGPLLKKLFTNRKVWGLMIGFTGYGYTFNLLLTWLPTFFKHTYGMDLMSSGLFTAVPWLISTISGIAVGGWLVDYFIKKGYPNTKVYRTVIIVGMSFGFFFLGSILTNNITVAIICISIGLAGISATAPVGWSISAELAPIGSVSMLSSMVNLANNLFGGIIAASLTGYLFDVTGSFTLSFLVAGFVLLLGLVFYVFVLGDVKRIKL</sequence>
<name>YYBO_BACSU</name>
<accession>P37489</accession>
<feature type="chain" id="PRO_0000121392" description="Uncharacterized transporter YybO">
    <location>
        <begin position="1"/>
        <end position="435"/>
    </location>
</feature>
<feature type="transmembrane region" description="Helical" evidence="1">
    <location>
        <begin position="26"/>
        <end position="46"/>
    </location>
</feature>
<feature type="transmembrane region" description="Helical" evidence="1">
    <location>
        <begin position="61"/>
        <end position="81"/>
    </location>
</feature>
<feature type="transmembrane region" description="Helical" evidence="1">
    <location>
        <begin position="96"/>
        <end position="116"/>
    </location>
</feature>
<feature type="transmembrane region" description="Helical" evidence="1">
    <location>
        <begin position="119"/>
        <end position="139"/>
    </location>
</feature>
<feature type="transmembrane region" description="Helical" evidence="1">
    <location>
        <begin position="150"/>
        <end position="170"/>
    </location>
</feature>
<feature type="transmembrane region" description="Helical" evidence="1">
    <location>
        <begin position="177"/>
        <end position="197"/>
    </location>
</feature>
<feature type="transmembrane region" description="Helical" evidence="1">
    <location>
        <begin position="242"/>
        <end position="262"/>
    </location>
</feature>
<feature type="transmembrane region" description="Helical" evidence="1">
    <location>
        <begin position="281"/>
        <end position="301"/>
    </location>
</feature>
<feature type="transmembrane region" description="Helical" evidence="1">
    <location>
        <begin position="325"/>
        <end position="345"/>
    </location>
</feature>
<feature type="transmembrane region" description="Helical" evidence="1">
    <location>
        <begin position="347"/>
        <end position="367"/>
    </location>
</feature>
<feature type="transmembrane region" description="Helical" evidence="1">
    <location>
        <begin position="385"/>
        <end position="405"/>
    </location>
</feature>
<feature type="transmembrane region" description="Helical" evidence="1">
    <location>
        <begin position="407"/>
        <end position="427"/>
    </location>
</feature>
<reference key="1">
    <citation type="journal article" date="1994" name="DNA Res.">
        <title>Systematic sequencing of the 180 kilobase region of the Bacillus subtilis chromosome containing the replication origin.</title>
        <authorList>
            <person name="Ogasawara N."/>
            <person name="Nakai S."/>
            <person name="Yoshikawa H."/>
        </authorList>
    </citation>
    <scope>NUCLEOTIDE SEQUENCE [GENOMIC DNA]</scope>
    <source>
        <strain>168</strain>
    </source>
</reference>
<reference key="2">
    <citation type="journal article" date="1997" name="Nature">
        <title>The complete genome sequence of the Gram-positive bacterium Bacillus subtilis.</title>
        <authorList>
            <person name="Kunst F."/>
            <person name="Ogasawara N."/>
            <person name="Moszer I."/>
            <person name="Albertini A.M."/>
            <person name="Alloni G."/>
            <person name="Azevedo V."/>
            <person name="Bertero M.G."/>
            <person name="Bessieres P."/>
            <person name="Bolotin A."/>
            <person name="Borchert S."/>
            <person name="Borriss R."/>
            <person name="Boursier L."/>
            <person name="Brans A."/>
            <person name="Braun M."/>
            <person name="Brignell S.C."/>
            <person name="Bron S."/>
            <person name="Brouillet S."/>
            <person name="Bruschi C.V."/>
            <person name="Caldwell B."/>
            <person name="Capuano V."/>
            <person name="Carter N.M."/>
            <person name="Choi S.-K."/>
            <person name="Codani J.-J."/>
            <person name="Connerton I.F."/>
            <person name="Cummings N.J."/>
            <person name="Daniel R.A."/>
            <person name="Denizot F."/>
            <person name="Devine K.M."/>
            <person name="Duesterhoeft A."/>
            <person name="Ehrlich S.D."/>
            <person name="Emmerson P.T."/>
            <person name="Entian K.-D."/>
            <person name="Errington J."/>
            <person name="Fabret C."/>
            <person name="Ferrari E."/>
            <person name="Foulger D."/>
            <person name="Fritz C."/>
            <person name="Fujita M."/>
            <person name="Fujita Y."/>
            <person name="Fuma S."/>
            <person name="Galizzi A."/>
            <person name="Galleron N."/>
            <person name="Ghim S.-Y."/>
            <person name="Glaser P."/>
            <person name="Goffeau A."/>
            <person name="Golightly E.J."/>
            <person name="Grandi G."/>
            <person name="Guiseppi G."/>
            <person name="Guy B.J."/>
            <person name="Haga K."/>
            <person name="Haiech J."/>
            <person name="Harwood C.R."/>
            <person name="Henaut A."/>
            <person name="Hilbert H."/>
            <person name="Holsappel S."/>
            <person name="Hosono S."/>
            <person name="Hullo M.-F."/>
            <person name="Itaya M."/>
            <person name="Jones L.-M."/>
            <person name="Joris B."/>
            <person name="Karamata D."/>
            <person name="Kasahara Y."/>
            <person name="Klaerr-Blanchard M."/>
            <person name="Klein C."/>
            <person name="Kobayashi Y."/>
            <person name="Koetter P."/>
            <person name="Koningstein G."/>
            <person name="Krogh S."/>
            <person name="Kumano M."/>
            <person name="Kurita K."/>
            <person name="Lapidus A."/>
            <person name="Lardinois S."/>
            <person name="Lauber J."/>
            <person name="Lazarevic V."/>
            <person name="Lee S.-M."/>
            <person name="Levine A."/>
            <person name="Liu H."/>
            <person name="Masuda S."/>
            <person name="Mauel C."/>
            <person name="Medigue C."/>
            <person name="Medina N."/>
            <person name="Mellado R.P."/>
            <person name="Mizuno M."/>
            <person name="Moestl D."/>
            <person name="Nakai S."/>
            <person name="Noback M."/>
            <person name="Noone D."/>
            <person name="O'Reilly M."/>
            <person name="Ogawa K."/>
            <person name="Ogiwara A."/>
            <person name="Oudega B."/>
            <person name="Park S.-H."/>
            <person name="Parro V."/>
            <person name="Pohl T.M."/>
            <person name="Portetelle D."/>
            <person name="Porwollik S."/>
            <person name="Prescott A.M."/>
            <person name="Presecan E."/>
            <person name="Pujic P."/>
            <person name="Purnelle B."/>
            <person name="Rapoport G."/>
            <person name="Rey M."/>
            <person name="Reynolds S."/>
            <person name="Rieger M."/>
            <person name="Rivolta C."/>
            <person name="Rocha E."/>
            <person name="Roche B."/>
            <person name="Rose M."/>
            <person name="Sadaie Y."/>
            <person name="Sato T."/>
            <person name="Scanlan E."/>
            <person name="Schleich S."/>
            <person name="Schroeter R."/>
            <person name="Scoffone F."/>
            <person name="Sekiguchi J."/>
            <person name="Sekowska A."/>
            <person name="Seror S.J."/>
            <person name="Serror P."/>
            <person name="Shin B.-S."/>
            <person name="Soldo B."/>
            <person name="Sorokin A."/>
            <person name="Tacconi E."/>
            <person name="Takagi T."/>
            <person name="Takahashi H."/>
            <person name="Takemaru K."/>
            <person name="Takeuchi M."/>
            <person name="Tamakoshi A."/>
            <person name="Tanaka T."/>
            <person name="Terpstra P."/>
            <person name="Tognoni A."/>
            <person name="Tosato V."/>
            <person name="Uchiyama S."/>
            <person name="Vandenbol M."/>
            <person name="Vannier F."/>
            <person name="Vassarotti A."/>
            <person name="Viari A."/>
            <person name="Wambutt R."/>
            <person name="Wedler E."/>
            <person name="Wedler H."/>
            <person name="Weitzenegger T."/>
            <person name="Winters P."/>
            <person name="Wipat A."/>
            <person name="Yamamoto H."/>
            <person name="Yamane K."/>
            <person name="Yasumoto K."/>
            <person name="Yata K."/>
            <person name="Yoshida K."/>
            <person name="Yoshikawa H.-F."/>
            <person name="Zumstein E."/>
            <person name="Yoshikawa H."/>
            <person name="Danchin A."/>
        </authorList>
    </citation>
    <scope>NUCLEOTIDE SEQUENCE [LARGE SCALE GENOMIC DNA]</scope>
    <source>
        <strain>168</strain>
    </source>
</reference>